<name>CYB_LEPAL</name>
<reference key="1">
    <citation type="submission" date="1997-06" db="EMBL/GenBank/DDBJ databases">
        <title>Cytochrome b phylogeny of North American hares and jackrabbits (Lepus, Lagomorpha) and the effects of mutational saturation in outgroup taxa.</title>
        <authorList>
            <person name="Halanych K.M."/>
            <person name="Demboski J.R."/>
            <person name="van Vuuren B.J."/>
            <person name="Klein D.R."/>
            <person name="Cook J.A."/>
        </authorList>
    </citation>
    <scope>NUCLEOTIDE SEQUENCE [GENOMIC DNA]</scope>
    <source>
        <strain>Isolate NK 4504</strain>
        <strain>Isolate NK 6589</strain>
    </source>
</reference>
<proteinExistence type="inferred from homology"/>
<keyword id="KW-0249">Electron transport</keyword>
<keyword id="KW-0349">Heme</keyword>
<keyword id="KW-0408">Iron</keyword>
<keyword id="KW-0472">Membrane</keyword>
<keyword id="KW-0479">Metal-binding</keyword>
<keyword id="KW-0496">Mitochondrion</keyword>
<keyword id="KW-0999">Mitochondrion inner membrane</keyword>
<keyword id="KW-0679">Respiratory chain</keyword>
<keyword id="KW-0812">Transmembrane</keyword>
<keyword id="KW-1133">Transmembrane helix</keyword>
<keyword id="KW-0813">Transport</keyword>
<keyword id="KW-0830">Ubiquinone</keyword>
<organism>
    <name type="scientific">Lepus alleni</name>
    <name type="common">Antelope jackrabbit</name>
    <dbReference type="NCBI Taxonomy" id="62617"/>
    <lineage>
        <taxon>Eukaryota</taxon>
        <taxon>Metazoa</taxon>
        <taxon>Chordata</taxon>
        <taxon>Craniata</taxon>
        <taxon>Vertebrata</taxon>
        <taxon>Euteleostomi</taxon>
        <taxon>Mammalia</taxon>
        <taxon>Eutheria</taxon>
        <taxon>Euarchontoglires</taxon>
        <taxon>Glires</taxon>
        <taxon>Lagomorpha</taxon>
        <taxon>Leporidae</taxon>
        <taxon>Lepus</taxon>
    </lineage>
</organism>
<accession>O47558</accession>
<accession>O47559</accession>
<dbReference type="EMBL" id="AF010156">
    <property type="protein sequence ID" value="AAB94496.1"/>
    <property type="molecule type" value="Genomic_DNA"/>
</dbReference>
<dbReference type="EMBL" id="AF010157">
    <property type="protein sequence ID" value="AAB94497.1"/>
    <property type="molecule type" value="Genomic_DNA"/>
</dbReference>
<dbReference type="SMR" id="O47558"/>
<dbReference type="GO" id="GO:0005743">
    <property type="term" value="C:mitochondrial inner membrane"/>
    <property type="evidence" value="ECO:0007669"/>
    <property type="project" value="UniProtKB-SubCell"/>
</dbReference>
<dbReference type="GO" id="GO:0046872">
    <property type="term" value="F:metal ion binding"/>
    <property type="evidence" value="ECO:0007669"/>
    <property type="project" value="UniProtKB-KW"/>
</dbReference>
<dbReference type="GO" id="GO:0008121">
    <property type="term" value="F:ubiquinol-cytochrome-c reductase activity"/>
    <property type="evidence" value="ECO:0007669"/>
    <property type="project" value="TreeGrafter"/>
</dbReference>
<dbReference type="GO" id="GO:0006122">
    <property type="term" value="P:mitochondrial electron transport, ubiquinol to cytochrome c"/>
    <property type="evidence" value="ECO:0007669"/>
    <property type="project" value="TreeGrafter"/>
</dbReference>
<dbReference type="CDD" id="cd00284">
    <property type="entry name" value="Cytochrome_b_N"/>
    <property type="match status" value="1"/>
</dbReference>
<dbReference type="Gene3D" id="1.20.810.10">
    <property type="entry name" value="Cytochrome Bc1 Complex, Chain C"/>
    <property type="match status" value="1"/>
</dbReference>
<dbReference type="InterPro" id="IPR005798">
    <property type="entry name" value="Cyt_b/b6_C"/>
</dbReference>
<dbReference type="InterPro" id="IPR005797">
    <property type="entry name" value="Cyt_b/b6_N"/>
</dbReference>
<dbReference type="InterPro" id="IPR027387">
    <property type="entry name" value="Cytb/b6-like_sf"/>
</dbReference>
<dbReference type="InterPro" id="IPR048259">
    <property type="entry name" value="Cytochrome_b_N_euk/bac"/>
</dbReference>
<dbReference type="InterPro" id="IPR016174">
    <property type="entry name" value="Di-haem_cyt_TM"/>
</dbReference>
<dbReference type="PANTHER" id="PTHR19271">
    <property type="entry name" value="CYTOCHROME B"/>
    <property type="match status" value="1"/>
</dbReference>
<dbReference type="PANTHER" id="PTHR19271:SF16">
    <property type="entry name" value="CYTOCHROME B"/>
    <property type="match status" value="1"/>
</dbReference>
<dbReference type="Pfam" id="PF00033">
    <property type="entry name" value="Cytochrome_B"/>
    <property type="match status" value="1"/>
</dbReference>
<dbReference type="PIRSF" id="PIRSF000032">
    <property type="entry name" value="Cytochrome_b6"/>
    <property type="match status" value="1"/>
</dbReference>
<dbReference type="SUPFAM" id="SSF81342">
    <property type="entry name" value="Transmembrane di-heme cytochromes"/>
    <property type="match status" value="1"/>
</dbReference>
<dbReference type="PROSITE" id="PS51003">
    <property type="entry name" value="CYTB_CTER"/>
    <property type="match status" value="1"/>
</dbReference>
<dbReference type="PROSITE" id="PS51002">
    <property type="entry name" value="CYTB_NTER"/>
    <property type="match status" value="1"/>
</dbReference>
<sequence>MTNIRKTHPLLKIVNHSLIDLPAPSNISAWWNFGSLLGLCLMIQILTGLFLAMHYTSDTATAFSSVTHICRDVNYGWLIRYLHANGASMFFICLYMHVGRGIYYGSYTYLETWNIGIILLFAVMATAFMGYVLPWGQMSFWGATVITNLLSAIPYIGTTLVEWIWGGFSVDKATLTRFFAFHFILPFIIAALVMIHLLFLHETGSNNPSGIPSDSDKIPFHPYYTIKDVLGFLM</sequence>
<protein>
    <recommendedName>
        <fullName>Cytochrome b</fullName>
    </recommendedName>
    <alternativeName>
        <fullName>Complex III subunit 3</fullName>
    </alternativeName>
    <alternativeName>
        <fullName>Complex III subunit III</fullName>
    </alternativeName>
    <alternativeName>
        <fullName>Cytochrome b-c1 complex subunit 3</fullName>
    </alternativeName>
    <alternativeName>
        <fullName>Ubiquinol-cytochrome-c reductase complex cytochrome b subunit</fullName>
    </alternativeName>
</protein>
<comment type="function">
    <text evidence="2">Component of the ubiquinol-cytochrome c reductase complex (complex III or cytochrome b-c1 complex) that is part of the mitochondrial respiratory chain. The b-c1 complex mediates electron transfer from ubiquinol to cytochrome c. Contributes to the generation of a proton gradient across the mitochondrial membrane that is then used for ATP synthesis.</text>
</comment>
<comment type="cofactor">
    <cofactor evidence="2">
        <name>heme b</name>
        <dbReference type="ChEBI" id="CHEBI:60344"/>
    </cofactor>
    <text evidence="2">Binds 2 heme b groups non-covalently.</text>
</comment>
<comment type="subunit">
    <text evidence="2">The cytochrome bc1 complex contains 11 subunits: 3 respiratory subunits (MT-CYB, CYC1 and UQCRFS1), 2 core proteins (UQCRC1 and UQCRC2) and 6 low-molecular weight proteins (UQCRH/QCR6, UQCRB/QCR7, UQCRQ/QCR8, UQCR10/QCR9, UQCR11/QCR10 and a cleavage product of UQCRFS1). This cytochrome bc1 complex then forms a dimer.</text>
</comment>
<comment type="subcellular location">
    <subcellularLocation>
        <location evidence="2">Mitochondrion inner membrane</location>
        <topology evidence="2">Multi-pass membrane protein</topology>
    </subcellularLocation>
</comment>
<comment type="miscellaneous">
    <text evidence="1">Heme 1 (or BL or b562) is low-potential and absorbs at about 562 nm, and heme 2 (or BH or b566) is high-potential and absorbs at about 566 nm.</text>
</comment>
<comment type="similarity">
    <text evidence="3 4">Belongs to the cytochrome b family.</text>
</comment>
<comment type="caution">
    <text evidence="2">The full-length protein contains only eight transmembrane helices, not nine as predicted by bioinformatics tools.</text>
</comment>
<geneLocation type="mitochondrion"/>
<feature type="chain" id="PRO_0000061096" description="Cytochrome b">
    <location>
        <begin position="1"/>
        <end position="234" status="greater than"/>
    </location>
</feature>
<feature type="transmembrane region" description="Helical" evidence="2">
    <location>
        <begin position="33"/>
        <end position="53"/>
    </location>
</feature>
<feature type="transmembrane region" description="Helical" evidence="2">
    <location>
        <begin position="77"/>
        <end position="98"/>
    </location>
</feature>
<feature type="transmembrane region" description="Helical" evidence="2">
    <location>
        <begin position="113"/>
        <end position="133"/>
    </location>
</feature>
<feature type="transmembrane region" description="Helical" evidence="2">
    <location>
        <begin position="178"/>
        <end position="198"/>
    </location>
</feature>
<feature type="transmembrane region" description="Helical" evidence="2">
    <location>
        <begin position="226"/>
        <end position="234" status="greater than"/>
    </location>
</feature>
<feature type="binding site" description="axial binding residue" evidence="2">
    <location>
        <position position="83"/>
    </location>
    <ligand>
        <name>heme b</name>
        <dbReference type="ChEBI" id="CHEBI:60344"/>
        <label>b562</label>
    </ligand>
    <ligandPart>
        <name>Fe</name>
        <dbReference type="ChEBI" id="CHEBI:18248"/>
    </ligandPart>
</feature>
<feature type="binding site" description="axial binding residue" evidence="2">
    <location>
        <position position="97"/>
    </location>
    <ligand>
        <name>heme b</name>
        <dbReference type="ChEBI" id="CHEBI:60344"/>
        <label>b566</label>
    </ligand>
    <ligandPart>
        <name>Fe</name>
        <dbReference type="ChEBI" id="CHEBI:18248"/>
    </ligandPart>
</feature>
<feature type="binding site" description="axial binding residue" evidence="2">
    <location>
        <position position="182"/>
    </location>
    <ligand>
        <name>heme b</name>
        <dbReference type="ChEBI" id="CHEBI:60344"/>
        <label>b562</label>
    </ligand>
    <ligandPart>
        <name>Fe</name>
        <dbReference type="ChEBI" id="CHEBI:18248"/>
    </ligandPart>
</feature>
<feature type="binding site" description="axial binding residue" evidence="2">
    <location>
        <position position="196"/>
    </location>
    <ligand>
        <name>heme b</name>
        <dbReference type="ChEBI" id="CHEBI:60344"/>
        <label>b566</label>
    </ligand>
    <ligandPart>
        <name>Fe</name>
        <dbReference type="ChEBI" id="CHEBI:18248"/>
    </ligandPart>
</feature>
<feature type="binding site" evidence="2">
    <location>
        <position position="201"/>
    </location>
    <ligand>
        <name>a ubiquinone</name>
        <dbReference type="ChEBI" id="CHEBI:16389"/>
    </ligand>
</feature>
<feature type="sequence variant" description="In strain: Isolate NK 4504.">
    <original>P</original>
    <variation>H</variation>
    <location>
        <position position="154"/>
    </location>
</feature>
<feature type="sequence variant" description="In strain: Isolate NK 4504.">
    <original>T</original>
    <variation>S</variation>
    <location>
        <position position="203"/>
    </location>
</feature>
<feature type="non-terminal residue">
    <location>
        <position position="234"/>
    </location>
</feature>
<evidence type="ECO:0000250" key="1"/>
<evidence type="ECO:0000250" key="2">
    <source>
        <dbReference type="UniProtKB" id="P00157"/>
    </source>
</evidence>
<evidence type="ECO:0000255" key="3">
    <source>
        <dbReference type="PROSITE-ProRule" id="PRU00967"/>
    </source>
</evidence>
<evidence type="ECO:0000255" key="4">
    <source>
        <dbReference type="PROSITE-ProRule" id="PRU00968"/>
    </source>
</evidence>
<gene>
    <name type="primary">MT-CYB</name>
    <name type="synonym">COB</name>
    <name type="synonym">CYTB</name>
    <name type="synonym">MTCYB</name>
</gene>